<organism>
    <name type="scientific">Francisella tularensis subsp. novicida (strain U112)</name>
    <dbReference type="NCBI Taxonomy" id="401614"/>
    <lineage>
        <taxon>Bacteria</taxon>
        <taxon>Pseudomonadati</taxon>
        <taxon>Pseudomonadota</taxon>
        <taxon>Gammaproteobacteria</taxon>
        <taxon>Thiotrichales</taxon>
        <taxon>Francisellaceae</taxon>
        <taxon>Francisella</taxon>
    </lineage>
</organism>
<comment type="function">
    <text evidence="1">Transfers and isomerizes the ribose moiety from AdoMet to the 7-aminomethyl group of 7-deazaguanine (preQ1-tRNA) to give epoxyqueuosine (oQ-tRNA).</text>
</comment>
<comment type="catalytic activity">
    <reaction evidence="1">
        <text>7-aminomethyl-7-carbaguanosine(34) in tRNA + S-adenosyl-L-methionine = epoxyqueuosine(34) in tRNA + adenine + L-methionine + 2 H(+)</text>
        <dbReference type="Rhea" id="RHEA:32155"/>
        <dbReference type="Rhea" id="RHEA-COMP:10342"/>
        <dbReference type="Rhea" id="RHEA-COMP:18582"/>
        <dbReference type="ChEBI" id="CHEBI:15378"/>
        <dbReference type="ChEBI" id="CHEBI:16708"/>
        <dbReference type="ChEBI" id="CHEBI:57844"/>
        <dbReference type="ChEBI" id="CHEBI:59789"/>
        <dbReference type="ChEBI" id="CHEBI:82833"/>
        <dbReference type="ChEBI" id="CHEBI:194443"/>
        <dbReference type="EC" id="2.4.99.17"/>
    </reaction>
</comment>
<comment type="pathway">
    <text evidence="1">tRNA modification; tRNA-queuosine biosynthesis.</text>
</comment>
<comment type="subunit">
    <text evidence="1">Monomer.</text>
</comment>
<comment type="subcellular location">
    <subcellularLocation>
        <location evidence="1">Cytoplasm</location>
    </subcellularLocation>
</comment>
<comment type="similarity">
    <text evidence="1">Belongs to the QueA family.</text>
</comment>
<name>QUEA_FRATN</name>
<evidence type="ECO:0000255" key="1">
    <source>
        <dbReference type="HAMAP-Rule" id="MF_00113"/>
    </source>
</evidence>
<feature type="chain" id="PRO_1000071338" description="S-adenosylmethionine:tRNA ribosyltransferase-isomerase">
    <location>
        <begin position="1"/>
        <end position="338"/>
    </location>
</feature>
<gene>
    <name evidence="1" type="primary">queA</name>
    <name type="ordered locus">FTN_1234</name>
</gene>
<accession>A0Q7A0</accession>
<protein>
    <recommendedName>
        <fullName evidence="1">S-adenosylmethionine:tRNA ribosyltransferase-isomerase</fullName>
        <ecNumber evidence="1">2.4.99.17</ecNumber>
    </recommendedName>
    <alternativeName>
        <fullName evidence="1">Queuosine biosynthesis protein QueA</fullName>
    </alternativeName>
</protein>
<proteinExistence type="inferred from homology"/>
<dbReference type="EC" id="2.4.99.17" evidence="1"/>
<dbReference type="EMBL" id="CP000439">
    <property type="protein sequence ID" value="ABK90115.1"/>
    <property type="molecule type" value="Genomic_DNA"/>
</dbReference>
<dbReference type="RefSeq" id="WP_003039968.1">
    <property type="nucleotide sequence ID" value="NC_008601.1"/>
</dbReference>
<dbReference type="SMR" id="A0Q7A0"/>
<dbReference type="KEGG" id="ftn:FTN_1234"/>
<dbReference type="KEGG" id="ftx:AW25_772"/>
<dbReference type="BioCyc" id="FTUL401614:G1G75-1278-MONOMER"/>
<dbReference type="UniPathway" id="UPA00392"/>
<dbReference type="Proteomes" id="UP000000762">
    <property type="component" value="Chromosome"/>
</dbReference>
<dbReference type="GO" id="GO:0005737">
    <property type="term" value="C:cytoplasm"/>
    <property type="evidence" value="ECO:0007669"/>
    <property type="project" value="UniProtKB-SubCell"/>
</dbReference>
<dbReference type="GO" id="GO:0051075">
    <property type="term" value="F:S-adenosylmethionine:tRNA ribosyltransferase-isomerase activity"/>
    <property type="evidence" value="ECO:0007669"/>
    <property type="project" value="UniProtKB-EC"/>
</dbReference>
<dbReference type="GO" id="GO:0008616">
    <property type="term" value="P:queuosine biosynthetic process"/>
    <property type="evidence" value="ECO:0007669"/>
    <property type="project" value="UniProtKB-UniRule"/>
</dbReference>
<dbReference type="GO" id="GO:0002099">
    <property type="term" value="P:tRNA wobble guanine modification"/>
    <property type="evidence" value="ECO:0007669"/>
    <property type="project" value="TreeGrafter"/>
</dbReference>
<dbReference type="FunFam" id="3.40.1780.10:FF:000001">
    <property type="entry name" value="S-adenosylmethionine:tRNA ribosyltransferase-isomerase"/>
    <property type="match status" value="1"/>
</dbReference>
<dbReference type="Gene3D" id="2.40.10.240">
    <property type="entry name" value="QueA-like"/>
    <property type="match status" value="1"/>
</dbReference>
<dbReference type="Gene3D" id="3.40.1780.10">
    <property type="entry name" value="QueA-like"/>
    <property type="match status" value="1"/>
</dbReference>
<dbReference type="HAMAP" id="MF_00113">
    <property type="entry name" value="QueA"/>
    <property type="match status" value="1"/>
</dbReference>
<dbReference type="InterPro" id="IPR003699">
    <property type="entry name" value="QueA"/>
</dbReference>
<dbReference type="InterPro" id="IPR042118">
    <property type="entry name" value="QueA_dom1"/>
</dbReference>
<dbReference type="InterPro" id="IPR042119">
    <property type="entry name" value="QueA_dom2"/>
</dbReference>
<dbReference type="InterPro" id="IPR036100">
    <property type="entry name" value="QueA_sf"/>
</dbReference>
<dbReference type="NCBIfam" id="NF001140">
    <property type="entry name" value="PRK00147.1"/>
    <property type="match status" value="1"/>
</dbReference>
<dbReference type="NCBIfam" id="TIGR00113">
    <property type="entry name" value="queA"/>
    <property type="match status" value="1"/>
</dbReference>
<dbReference type="PANTHER" id="PTHR30307">
    <property type="entry name" value="S-ADENOSYLMETHIONINE:TRNA RIBOSYLTRANSFERASE-ISOMERASE"/>
    <property type="match status" value="1"/>
</dbReference>
<dbReference type="PANTHER" id="PTHR30307:SF0">
    <property type="entry name" value="S-ADENOSYLMETHIONINE:TRNA RIBOSYLTRANSFERASE-ISOMERASE"/>
    <property type="match status" value="1"/>
</dbReference>
<dbReference type="Pfam" id="PF02547">
    <property type="entry name" value="Queuosine_synth"/>
    <property type="match status" value="1"/>
</dbReference>
<dbReference type="SUPFAM" id="SSF111337">
    <property type="entry name" value="QueA-like"/>
    <property type="match status" value="1"/>
</dbReference>
<keyword id="KW-0963">Cytoplasm</keyword>
<keyword id="KW-0671">Queuosine biosynthesis</keyword>
<keyword id="KW-0949">S-adenosyl-L-methionine</keyword>
<keyword id="KW-0808">Transferase</keyword>
<reference key="1">
    <citation type="journal article" date="2007" name="Genome Biol.">
        <title>Comparison of Francisella tularensis genomes reveals evolutionary events associated with the emergence of human pathogenic strains.</title>
        <authorList>
            <person name="Rohmer L."/>
            <person name="Fong C."/>
            <person name="Abmayr S."/>
            <person name="Wasnick M."/>
            <person name="Larson Freeman T.J."/>
            <person name="Radey M."/>
            <person name="Guina T."/>
            <person name="Svensson K."/>
            <person name="Hayden H.S."/>
            <person name="Jacobs M."/>
            <person name="Gallagher L.A."/>
            <person name="Manoil C."/>
            <person name="Ernst R.K."/>
            <person name="Drees B."/>
            <person name="Buckley D."/>
            <person name="Haugen E."/>
            <person name="Bovee D."/>
            <person name="Zhou Y."/>
            <person name="Chang J."/>
            <person name="Levy R."/>
            <person name="Lim R."/>
            <person name="Gillett W."/>
            <person name="Guenthener D."/>
            <person name="Kang A."/>
            <person name="Shaffer S.A."/>
            <person name="Taylor G."/>
            <person name="Chen J."/>
            <person name="Gallis B."/>
            <person name="D'Argenio D.A."/>
            <person name="Forsman M."/>
            <person name="Olson M.V."/>
            <person name="Goodlett D.R."/>
            <person name="Kaul R."/>
            <person name="Miller S.I."/>
            <person name="Brittnacher M.J."/>
        </authorList>
    </citation>
    <scope>NUCLEOTIDE SEQUENCE [LARGE SCALE GENOMIC DNA]</scope>
    <source>
        <strain>U112</strain>
    </source>
</reference>
<sequence>MKTDDFDYKLPEELIASYPLENRDASRLLKLNKQTGEIADHKFTDFIDFISPGDLLVFNNSKVMLARLYGSKTTGAKLEYLIERIKNPKLFETHIKANRSPAIGSEIYVEDTLAKVLDKDGGMYLLEIQGDKDIYQLMEEFGHIPLPPYMKRDDEEFDAERYQTVYAQDLGSVAAPTAGLHFSKELMQQIKNKGVDIAYITLHVGSGTFKPVQVDDVESHKMHAEVISVPVEVCQKIRQTKENGGRVIAIGTTSVRSLETAGQNGQIEPYQGETDIFLYPGKKFNVVDAMITNFHLPKSTLIMLVSAFADKEKIIKAYEHAIAERYRFFSYGDAMFIY</sequence>